<sequence>MEKVDVYDELVNLKATELRLGLPGTEETVSCGKSNKRVLPEATEKEIESTGKTETASPPKAQIVGWPPVRSYRKNNVQTKKSESEGQGNYVKVSMDGAPYLRKIDLTMYKQYPELMKSLENMFKFSVGEYFEREGYKGSDFVPTYEDKDGDWMLVGDVPWEMFVSSCKRLRIMKGSEVKGLGCGGL</sequence>
<keyword id="KW-0927">Auxin signaling pathway</keyword>
<keyword id="KW-0539">Nucleus</keyword>
<keyword id="KW-1185">Reference proteome</keyword>
<keyword id="KW-0678">Repressor</keyword>
<keyword id="KW-0804">Transcription</keyword>
<keyword id="KW-0805">Transcription regulation</keyword>
<organism>
    <name type="scientific">Arabidopsis thaliana</name>
    <name type="common">Mouse-ear cress</name>
    <dbReference type="NCBI Taxonomy" id="3702"/>
    <lineage>
        <taxon>Eukaryota</taxon>
        <taxon>Viridiplantae</taxon>
        <taxon>Streptophyta</taxon>
        <taxon>Embryophyta</taxon>
        <taxon>Tracheophyta</taxon>
        <taxon>Spermatophyta</taxon>
        <taxon>Magnoliopsida</taxon>
        <taxon>eudicotyledons</taxon>
        <taxon>Gunneridae</taxon>
        <taxon>Pentapetalae</taxon>
        <taxon>rosids</taxon>
        <taxon>malvids</taxon>
        <taxon>Brassicales</taxon>
        <taxon>Brassicaceae</taxon>
        <taxon>Camelineae</taxon>
        <taxon>Arabidopsis</taxon>
    </lineage>
</organism>
<feature type="chain" id="PRO_0000112835" description="Auxin-responsive protein IAA4">
    <location>
        <begin position="1"/>
        <end position="186"/>
    </location>
</feature>
<feature type="domain" description="PB1" evidence="2">
    <location>
        <begin position="88"/>
        <end position="175"/>
    </location>
</feature>
<feature type="region of interest" description="Disordered" evidence="3">
    <location>
        <begin position="25"/>
        <end position="62"/>
    </location>
</feature>
<feature type="short sequence motif" description="EAR-like (transcriptional repression)">
    <location>
        <begin position="18"/>
        <end position="22"/>
    </location>
</feature>
<feature type="compositionally biased region" description="Basic and acidic residues" evidence="3">
    <location>
        <begin position="38"/>
        <end position="51"/>
    </location>
</feature>
<accession>P33077</accession>
<comment type="function">
    <text evidence="4">Aux/IAA proteins are short-lived transcriptional factors that function as repressors of early auxin response genes at low auxin concentrations. Repression is thought to result from the interaction with auxin response factors (ARFs), proteins that bind to the auxin-responsive promoter element (AuxRE). Formation of heterodimers with ARF proteins may alter their ability to modulate early auxin response genes expression.</text>
</comment>
<comment type="subunit">
    <text evidence="1 5">Homodimers and heterodimers (By similarity). Interacts with TPL.</text>
</comment>
<comment type="interaction">
    <interactant intactId="EBI-632187">
        <id>P33077</id>
    </interactant>
    <interactant intactId="EBI-529887">
        <id>Q8RYC8</id>
        <label>ARF19</label>
    </interactant>
    <organismsDiffer>false</organismsDiffer>
    <experiments>3</experiments>
</comment>
<comment type="interaction">
    <interactant intactId="EBI-632187">
        <id>P33077</id>
    </interactant>
    <interactant intactId="EBI-630505">
        <id>P49677</id>
        <label>IAA1</label>
    </interactant>
    <organismsDiffer>false</organismsDiffer>
    <experiments>10</experiments>
</comment>
<comment type="interaction">
    <interactant intactId="EBI-632187">
        <id>P33077</id>
    </interactant>
    <interactant intactId="EBI-3946434">
        <id>Q38828</id>
        <label>IAA10</label>
    </interactant>
    <organismsDiffer>false</organismsDiffer>
    <experiments>10</experiments>
</comment>
<comment type="interaction">
    <interactant intactId="EBI-632187">
        <id>P33077</id>
    </interactant>
    <interactant intactId="EBI-2367923">
        <id>Q38829</id>
        <label>IAA11</label>
    </interactant>
    <organismsDiffer>false</organismsDiffer>
    <experiments>7</experiments>
</comment>
<comment type="interaction">
    <interactant intactId="EBI-632187">
        <id>P33077</id>
    </interactant>
    <interactant intactId="EBI-617608">
        <id>Q38830</id>
        <label>IAA12</label>
    </interactant>
    <organismsDiffer>false</organismsDiffer>
    <experiments>6</experiments>
</comment>
<comment type="interaction">
    <interactant intactId="EBI-632187">
        <id>P33077</id>
    </interactant>
    <interactant intactId="EBI-1554143">
        <id>Q38831</id>
        <label>IAA13</label>
    </interactant>
    <organismsDiffer>false</organismsDiffer>
    <experiments>9</experiments>
</comment>
<comment type="interaction">
    <interactant intactId="EBI-632187">
        <id>P33077</id>
    </interactant>
    <interactant intactId="EBI-2295562">
        <id>Q38832</id>
        <label>IAA14</label>
    </interactant>
    <organismsDiffer>false</organismsDiffer>
    <experiments>4</experiments>
</comment>
<comment type="interaction">
    <interactant intactId="EBI-632187">
        <id>P33077</id>
    </interactant>
    <interactant intactId="EBI-25524519">
        <id>A0A2H1ZEF6</id>
        <label>IAA15</label>
    </interactant>
    <organismsDiffer>false</organismsDiffer>
    <experiments>5</experiments>
</comment>
<comment type="interaction">
    <interactant intactId="EBI-632187">
        <id>P33077</id>
    </interactant>
    <interactant intactId="EBI-632231">
        <id>O24407</id>
        <label>IAA16</label>
    </interactant>
    <organismsDiffer>false</organismsDiffer>
    <experiments>9</experiments>
</comment>
<comment type="interaction">
    <interactant intactId="EBI-632187">
        <id>P33077</id>
    </interactant>
    <interactant intactId="EBI-632243">
        <id>P93830</id>
        <label>IAA17</label>
    </interactant>
    <organismsDiffer>false</organismsDiffer>
    <experiments>8</experiments>
</comment>
<comment type="interaction">
    <interactant intactId="EBI-632187">
        <id>P33077</id>
    </interactant>
    <interactant intactId="EBI-2295525">
        <id>O24408</id>
        <label>IAA18</label>
    </interactant>
    <organismsDiffer>false</organismsDiffer>
    <experiments>4</experiments>
</comment>
<comment type="interaction">
    <interactant intactId="EBI-632187">
        <id>P33077</id>
    </interactant>
    <interactant intactId="EBI-632257">
        <id>O24409</id>
        <label>IAA19</label>
    </interactant>
    <organismsDiffer>false</organismsDiffer>
    <experiments>9</experiments>
</comment>
<comment type="interaction">
    <interactant intactId="EBI-632187">
        <id>P33077</id>
    </interactant>
    <interactant intactId="EBI-632343">
        <id>P49678</id>
        <label>IAA2</label>
    </interactant>
    <organismsDiffer>false</organismsDiffer>
    <experiments>9</experiments>
</comment>
<comment type="interaction">
    <interactant intactId="EBI-632187">
        <id>P33077</id>
    </interactant>
    <interactant intactId="EBI-632272">
        <id>O24410</id>
        <label>IAA20</label>
    </interactant>
    <organismsDiffer>false</organismsDiffer>
    <experiments>6</experiments>
</comment>
<comment type="interaction">
    <interactant intactId="EBI-632187">
        <id>P33077</id>
    </interactant>
    <interactant intactId="EBI-3947418">
        <id>Q8LAL2</id>
        <label>IAA26</label>
    </interactant>
    <organismsDiffer>false</organismsDiffer>
    <experiments>8</experiments>
</comment>
<comment type="interaction">
    <interactant intactId="EBI-632187">
        <id>P33077</id>
    </interactant>
    <interactant intactId="EBI-3946677">
        <id>Q9ZSY8</id>
        <label>IAA27</label>
    </interactant>
    <organismsDiffer>false</organismsDiffer>
    <experiments>9</experiments>
</comment>
<comment type="interaction">
    <interactant intactId="EBI-632187">
        <id>P33077</id>
    </interactant>
    <interactant intactId="EBI-3133404">
        <id>Q9XFM0</id>
        <label>IAA28</label>
    </interactant>
    <organismsDiffer>false</organismsDiffer>
    <experiments>9</experiments>
</comment>
<comment type="interaction">
    <interactant intactId="EBI-632187">
        <id>P33077</id>
    </interactant>
    <interactant intactId="EBI-307174">
        <id>Q38822</id>
        <label>IAA3</label>
    </interactant>
    <organismsDiffer>false</organismsDiffer>
    <experiments>9</experiments>
</comment>
<comment type="interaction">
    <interactant intactId="EBI-632187">
        <id>P33077</id>
    </interactant>
    <interactant intactId="EBI-3946408">
        <id>Q8H174</id>
        <label>IAA31</label>
    </interactant>
    <organismsDiffer>false</organismsDiffer>
    <experiments>3</experiments>
</comment>
<comment type="interaction">
    <interactant intactId="EBI-632187">
        <id>P33077</id>
    </interactant>
    <interactant intactId="EBI-3946448">
        <id>Q8RYC6</id>
        <label>IAA32</label>
    </interactant>
    <organismsDiffer>false</organismsDiffer>
    <experiments>5</experiments>
</comment>
<comment type="interaction">
    <interactant intactId="EBI-632187">
        <id>P33077</id>
    </interactant>
    <interactant intactId="EBI-3946739">
        <id>Q9FKM7</id>
        <label>IAA33</label>
    </interactant>
    <organismsDiffer>false</organismsDiffer>
    <experiments>3</experiments>
</comment>
<comment type="interaction">
    <interactant intactId="EBI-632187">
        <id>P33077</id>
    </interactant>
    <interactant intactId="EBI-3946459">
        <id>Q9C5X0</id>
        <label>IAA34</label>
    </interactant>
    <organismsDiffer>false</organismsDiffer>
    <experiments>6</experiments>
</comment>
<comment type="interaction">
    <interactant intactId="EBI-632187">
        <id>P33077</id>
    </interactant>
    <interactant intactId="EBI-632187">
        <id>P33077</id>
        <label>IAA4</label>
    </interactant>
    <organismsDiffer>false</organismsDiffer>
    <experiments>4</experiments>
</comment>
<comment type="interaction">
    <interactant intactId="EBI-632187">
        <id>P33077</id>
    </interactant>
    <interactant intactId="EBI-3946487">
        <id>P33078</id>
        <label>IAA5</label>
    </interactant>
    <organismsDiffer>false</organismsDiffer>
    <experiments>6</experiments>
</comment>
<comment type="interaction">
    <interactant intactId="EBI-632187">
        <id>P33077</id>
    </interactant>
    <interactant intactId="EBI-1554124">
        <id>Q38824</id>
        <label>IAA6</label>
    </interactant>
    <organismsDiffer>false</organismsDiffer>
    <experiments>10</experiments>
</comment>
<comment type="interaction">
    <interactant intactId="EBI-632187">
        <id>P33077</id>
    </interactant>
    <interactant intactId="EBI-632200">
        <id>Q38826</id>
        <label>IAA8</label>
    </interactant>
    <organismsDiffer>false</organismsDiffer>
    <experiments>7</experiments>
</comment>
<comment type="interaction">
    <interactant intactId="EBI-632187">
        <id>P33077</id>
    </interactant>
    <interactant intactId="EBI-632216">
        <id>Q38827</id>
        <label>IAA9</label>
    </interactant>
    <organismsDiffer>false</organismsDiffer>
    <experiments>4</experiments>
</comment>
<comment type="interaction">
    <interactant intactId="EBI-632187">
        <id>P33077</id>
    </interactant>
    <interactant intactId="EBI-2112286">
        <id>O65154</id>
        <label>KIWI</label>
    </interactant>
    <organismsDiffer>false</organismsDiffer>
    <experiments>3</experiments>
</comment>
<comment type="interaction">
    <interactant intactId="EBI-632187">
        <id>P33077</id>
    </interactant>
    <interactant intactId="EBI-25506855">
        <id>O23160</id>
        <label>MYB73</label>
    </interactant>
    <organismsDiffer>false</organismsDiffer>
    <experiments>3</experiments>
</comment>
<comment type="interaction">
    <interactant intactId="EBI-632187">
        <id>P33077</id>
    </interactant>
    <interactant intactId="EBI-15193025">
        <id>Q9LXU1</id>
        <label>NOT9B</label>
    </interactant>
    <organismsDiffer>false</organismsDiffer>
    <experiments>4</experiments>
</comment>
<comment type="interaction">
    <interactant intactId="EBI-632187">
        <id>P33077</id>
    </interactant>
    <interactant intactId="EBI-963647">
        <id>Q9C8Y3</id>
        <label>RGL1</label>
    </interactant>
    <organismsDiffer>false</organismsDiffer>
    <experiments>3</experiments>
</comment>
<comment type="interaction">
    <interactant intactId="EBI-632187">
        <id>P33077</id>
    </interactant>
    <interactant intactId="EBI-4426168">
        <id>Q9FTA2</id>
        <label>TCP21</label>
    </interactant>
    <organismsDiffer>false</organismsDiffer>
    <experiments>3</experiments>
</comment>
<comment type="subcellular location">
    <subcellularLocation>
        <location>Nucleus</location>
    </subcellularLocation>
</comment>
<comment type="tissue specificity">
    <text evidence="6">Preferentially expressed in stems, leaves and flowers.</text>
</comment>
<comment type="induction">
    <text evidence="6">By auxin.</text>
</comment>
<comment type="domain">
    <text>The N-terminal half of the protein contains two conserved domains I and II. Domain I includes a slightly degenerated ERF-associated amphiphilic repression (EAR) motif which seems to be involved in the activity of transcriptional repression. Domain II is required for the correct degradation of the protein through the SCF-mediated ubiquitin-proteasome pathway. Interactions between Aux/IAA proteins and auxin response factors (ARFs) occur through their C-terminal dimerization domains III and IV.</text>
</comment>
<comment type="similarity">
    <text evidence="7">Belongs to the Aux/IAA family.</text>
</comment>
<dbReference type="EMBL" id="X53435">
    <property type="protein sequence ID" value="CAA37526.1"/>
    <property type="molecule type" value="Genomic_DNA"/>
</dbReference>
<dbReference type="EMBL" id="L15450">
    <property type="protein sequence ID" value="AAA16571.1"/>
    <property type="molecule type" value="mRNA"/>
</dbReference>
<dbReference type="EMBL" id="AB026651">
    <property type="protein sequence ID" value="BAB11297.1"/>
    <property type="molecule type" value="Genomic_DNA"/>
</dbReference>
<dbReference type="EMBL" id="CP002688">
    <property type="protein sequence ID" value="AED94998.1"/>
    <property type="molecule type" value="Genomic_DNA"/>
</dbReference>
<dbReference type="EMBL" id="BT005853">
    <property type="protein sequence ID" value="AAO64788.1"/>
    <property type="molecule type" value="mRNA"/>
</dbReference>
<dbReference type="PIR" id="S12243">
    <property type="entry name" value="S12243"/>
</dbReference>
<dbReference type="RefSeq" id="NP_199183.1">
    <property type="nucleotide sequence ID" value="NM_123736.3"/>
</dbReference>
<dbReference type="SMR" id="P33077"/>
<dbReference type="BioGRID" id="19640">
    <property type="interactions" value="49"/>
</dbReference>
<dbReference type="ELM" id="P33077"/>
<dbReference type="FunCoup" id="P33077">
    <property type="interactions" value="1159"/>
</dbReference>
<dbReference type="IntAct" id="P33077">
    <property type="interactions" value="42"/>
</dbReference>
<dbReference type="STRING" id="3702.P33077"/>
<dbReference type="PaxDb" id="3702-AT5G43700.1"/>
<dbReference type="ProteomicsDB" id="232094"/>
<dbReference type="EnsemblPlants" id="AT5G43700.1">
    <property type="protein sequence ID" value="AT5G43700.1"/>
    <property type="gene ID" value="AT5G43700"/>
</dbReference>
<dbReference type="GeneID" id="834390"/>
<dbReference type="Gramene" id="AT5G43700.1">
    <property type="protein sequence ID" value="AT5G43700.1"/>
    <property type="gene ID" value="AT5G43700"/>
</dbReference>
<dbReference type="KEGG" id="ath:AT5G43700"/>
<dbReference type="Araport" id="AT5G43700"/>
<dbReference type="TAIR" id="AT5G43700">
    <property type="gene designation" value="ATAUX2-11"/>
</dbReference>
<dbReference type="eggNOG" id="ENOG502QU81">
    <property type="taxonomic scope" value="Eukaryota"/>
</dbReference>
<dbReference type="HOGENOM" id="CLU_049393_0_1_1"/>
<dbReference type="InParanoid" id="P33077"/>
<dbReference type="OMA" id="PMEANDG"/>
<dbReference type="OrthoDB" id="1926344at2759"/>
<dbReference type="PhylomeDB" id="P33077"/>
<dbReference type="PRO" id="PR:P33077"/>
<dbReference type="Proteomes" id="UP000006548">
    <property type="component" value="Chromosome 5"/>
</dbReference>
<dbReference type="ExpressionAtlas" id="P33077">
    <property type="expression patterns" value="baseline and differential"/>
</dbReference>
<dbReference type="GO" id="GO:0005634">
    <property type="term" value="C:nucleus"/>
    <property type="evidence" value="ECO:0000314"/>
    <property type="project" value="TAIR"/>
</dbReference>
<dbReference type="GO" id="GO:0003677">
    <property type="term" value="F:DNA binding"/>
    <property type="evidence" value="ECO:0000250"/>
    <property type="project" value="TAIR"/>
</dbReference>
<dbReference type="GO" id="GO:0003700">
    <property type="term" value="F:DNA-binding transcription factor activity"/>
    <property type="evidence" value="ECO:0000250"/>
    <property type="project" value="TAIR"/>
</dbReference>
<dbReference type="GO" id="GO:0042802">
    <property type="term" value="F:identical protein binding"/>
    <property type="evidence" value="ECO:0000353"/>
    <property type="project" value="IntAct"/>
</dbReference>
<dbReference type="GO" id="GO:0000976">
    <property type="term" value="F:transcription cis-regulatory region binding"/>
    <property type="evidence" value="ECO:0000353"/>
    <property type="project" value="TAIR"/>
</dbReference>
<dbReference type="GO" id="GO:0009734">
    <property type="term" value="P:auxin-activated signaling pathway"/>
    <property type="evidence" value="ECO:0007669"/>
    <property type="project" value="UniProtKB-KW"/>
</dbReference>
<dbReference type="GO" id="GO:0009733">
    <property type="term" value="P:response to auxin"/>
    <property type="evidence" value="ECO:0000270"/>
    <property type="project" value="TAIR"/>
</dbReference>
<dbReference type="FunFam" id="3.10.20.90:FF:000078">
    <property type="entry name" value="Auxin-responsive protein"/>
    <property type="match status" value="1"/>
</dbReference>
<dbReference type="Gene3D" id="3.10.20.90">
    <property type="entry name" value="Phosphatidylinositol 3-kinase Catalytic Subunit, Chain A, domain 1"/>
    <property type="match status" value="1"/>
</dbReference>
<dbReference type="InterPro" id="IPR033389">
    <property type="entry name" value="AUX/IAA_dom"/>
</dbReference>
<dbReference type="InterPro" id="IPR003311">
    <property type="entry name" value="AUX_IAA"/>
</dbReference>
<dbReference type="InterPro" id="IPR053793">
    <property type="entry name" value="PB1-like"/>
</dbReference>
<dbReference type="PANTHER" id="PTHR31734">
    <property type="entry name" value="AUXIN-RESPONSIVE PROTEIN IAA17"/>
    <property type="match status" value="1"/>
</dbReference>
<dbReference type="PANTHER" id="PTHR31734:SF227">
    <property type="entry name" value="AUXIN-RESPONSIVE PROTEIN IAA4"/>
    <property type="match status" value="1"/>
</dbReference>
<dbReference type="Pfam" id="PF02309">
    <property type="entry name" value="AUX_IAA"/>
    <property type="match status" value="1"/>
</dbReference>
<dbReference type="SUPFAM" id="SSF54277">
    <property type="entry name" value="CAD &amp; PB1 domains"/>
    <property type="match status" value="1"/>
</dbReference>
<dbReference type="PROSITE" id="PS51745">
    <property type="entry name" value="PB1"/>
    <property type="match status" value="1"/>
</dbReference>
<gene>
    <name type="primary">IAA4</name>
    <name type="synonym">AUX2-11</name>
    <name type="ordered locus">At5g43700</name>
    <name type="ORF">MQD19.3</name>
</gene>
<protein>
    <recommendedName>
        <fullName>Auxin-responsive protein IAA4</fullName>
    </recommendedName>
    <alternativeName>
        <fullName>Auxin-induced protein AUX2-11</fullName>
    </alternativeName>
    <alternativeName>
        <fullName>Indoleacetic acid-induced protein 4</fullName>
    </alternativeName>
</protein>
<reference key="1">
    <citation type="journal article" date="1990" name="Plant Mol. Biol.">
        <title>Structure and expression of two auxin-inducible genes from Arabidopsis.</title>
        <authorList>
            <person name="Conner T.W."/>
            <person name="Goekjian V.H."/>
            <person name="Lafayette P.R."/>
            <person name="Key J.L."/>
        </authorList>
    </citation>
    <scope>NUCLEOTIDE SEQUENCE [GENOMIC DNA]</scope>
    <source>
        <strain>cv. Columbia</strain>
    </source>
</reference>
<reference key="2">
    <citation type="journal article" date="1994" name="Proc. Natl. Acad. Sci. U.S.A.">
        <title>Early auxin-induced genes encode short-lived nuclear proteins.</title>
        <authorList>
            <person name="Abel S."/>
            <person name="Oeller P.W."/>
            <person name="Theologis A."/>
        </authorList>
    </citation>
    <scope>NUCLEOTIDE SEQUENCE [MRNA]</scope>
    <source>
        <strain>cv. Columbia</strain>
    </source>
</reference>
<reference key="3">
    <citation type="submission" date="1999-04" db="EMBL/GenBank/DDBJ databases">
        <title>Structural analysis of Arabidopsis thaliana chromosome 5. XI.</title>
        <authorList>
            <person name="Kaneko T."/>
            <person name="Katoh T."/>
            <person name="Asamizu E."/>
            <person name="Sato S."/>
            <person name="Nakamura Y."/>
            <person name="Kotani H."/>
            <person name="Tabata S."/>
        </authorList>
    </citation>
    <scope>NUCLEOTIDE SEQUENCE [LARGE SCALE GENOMIC DNA]</scope>
    <source>
        <strain>cv. Columbia</strain>
    </source>
</reference>
<reference key="4">
    <citation type="journal article" date="2017" name="Plant J.">
        <title>Araport11: a complete reannotation of the Arabidopsis thaliana reference genome.</title>
        <authorList>
            <person name="Cheng C.Y."/>
            <person name="Krishnakumar V."/>
            <person name="Chan A.P."/>
            <person name="Thibaud-Nissen F."/>
            <person name="Schobel S."/>
            <person name="Town C.D."/>
        </authorList>
    </citation>
    <scope>GENOME REANNOTATION</scope>
    <source>
        <strain>cv. Columbia</strain>
    </source>
</reference>
<reference key="5">
    <citation type="journal article" date="2003" name="Science">
        <title>Empirical analysis of transcriptional activity in the Arabidopsis genome.</title>
        <authorList>
            <person name="Yamada K."/>
            <person name="Lim J."/>
            <person name="Dale J.M."/>
            <person name="Chen H."/>
            <person name="Shinn P."/>
            <person name="Palm C.J."/>
            <person name="Southwick A.M."/>
            <person name="Wu H.C."/>
            <person name="Kim C.J."/>
            <person name="Nguyen M."/>
            <person name="Pham P.K."/>
            <person name="Cheuk R.F."/>
            <person name="Karlin-Newmann G."/>
            <person name="Liu S.X."/>
            <person name="Lam B."/>
            <person name="Sakano H."/>
            <person name="Wu T."/>
            <person name="Yu G."/>
            <person name="Miranda M."/>
            <person name="Quach H.L."/>
            <person name="Tripp M."/>
            <person name="Chang C.H."/>
            <person name="Lee J.M."/>
            <person name="Toriumi M.J."/>
            <person name="Chan M.M."/>
            <person name="Tang C.C."/>
            <person name="Onodera C.S."/>
            <person name="Deng J.M."/>
            <person name="Akiyama K."/>
            <person name="Ansari Y."/>
            <person name="Arakawa T."/>
            <person name="Banh J."/>
            <person name="Banno F."/>
            <person name="Bowser L."/>
            <person name="Brooks S.Y."/>
            <person name="Carninci P."/>
            <person name="Chao Q."/>
            <person name="Choy N."/>
            <person name="Enju A."/>
            <person name="Goldsmith A.D."/>
            <person name="Gurjal M."/>
            <person name="Hansen N.F."/>
            <person name="Hayashizaki Y."/>
            <person name="Johnson-Hopson C."/>
            <person name="Hsuan V.W."/>
            <person name="Iida K."/>
            <person name="Karnes M."/>
            <person name="Khan S."/>
            <person name="Koesema E."/>
            <person name="Ishida J."/>
            <person name="Jiang P.X."/>
            <person name="Jones T."/>
            <person name="Kawai J."/>
            <person name="Kamiya A."/>
            <person name="Meyers C."/>
            <person name="Nakajima M."/>
            <person name="Narusaka M."/>
            <person name="Seki M."/>
            <person name="Sakurai T."/>
            <person name="Satou M."/>
            <person name="Tamse R."/>
            <person name="Vaysberg M."/>
            <person name="Wallender E.K."/>
            <person name="Wong C."/>
            <person name="Yamamura Y."/>
            <person name="Yuan S."/>
            <person name="Shinozaki K."/>
            <person name="Davis R.W."/>
            <person name="Theologis A."/>
            <person name="Ecker J.R."/>
        </authorList>
    </citation>
    <scope>NUCLEOTIDE SEQUENCE [LARGE SCALE MRNA]</scope>
    <source>
        <strain>cv. Columbia</strain>
    </source>
</reference>
<reference key="6">
    <citation type="journal article" date="1995" name="J. Mol. Biol.">
        <title>The PS-IAA4/5-like family of early auxin-inducible mRNAs in Arabidopsis thaliana.</title>
        <authorList>
            <person name="Abel S."/>
            <person name="Nguyen M.D."/>
            <person name="Theologis A."/>
        </authorList>
    </citation>
    <scope>TISSUE SPECIFICITY</scope>
    <scope>INDUCTION</scope>
</reference>
<reference key="7">
    <citation type="journal article" date="2002" name="Plant Mol. Biol.">
        <title>Genetics of Aux/IAA and ARF action in plant growth and development.</title>
        <authorList>
            <person name="Liscum E."/>
            <person name="Reed J.W."/>
        </authorList>
    </citation>
    <scope>GENE FAMILY</scope>
    <scope>NOMENCLATURE</scope>
    <scope>FUNCTION</scope>
</reference>
<reference key="8">
    <citation type="journal article" date="2004" name="Plant Cell">
        <title>Aux/IAA proteins contain a potent transcriptional repression domain.</title>
        <authorList>
            <person name="Tiwari S.B."/>
            <person name="Hagen G."/>
            <person name="Guilfoyle T.J."/>
        </authorList>
    </citation>
    <scope>TRANSCRIPTIONAL REPRESSION DOMAIN</scope>
</reference>
<reference key="9">
    <citation type="journal article" date="2008" name="Science">
        <title>TOPLESS mediates auxin-dependent transcriptional repression during Arabidopsis embryogenesis.</title>
        <authorList>
            <person name="Szemenyei H."/>
            <person name="Hannon M."/>
            <person name="Long J.A."/>
        </authorList>
    </citation>
    <scope>INTERACTION WITH TPL</scope>
</reference>
<proteinExistence type="evidence at protein level"/>
<name>IAA4_ARATH</name>
<evidence type="ECO:0000250" key="1"/>
<evidence type="ECO:0000255" key="2">
    <source>
        <dbReference type="PROSITE-ProRule" id="PRU01081"/>
    </source>
</evidence>
<evidence type="ECO:0000256" key="3">
    <source>
        <dbReference type="SAM" id="MobiDB-lite"/>
    </source>
</evidence>
<evidence type="ECO:0000269" key="4">
    <source>
    </source>
</evidence>
<evidence type="ECO:0000269" key="5">
    <source>
    </source>
</evidence>
<evidence type="ECO:0000269" key="6">
    <source>
    </source>
</evidence>
<evidence type="ECO:0000305" key="7"/>